<name>GPX1_SCHPO</name>
<sequence>MSHFYDLAPKDKDGNPFPFSNLKGKVVLVVNTASKCGFTPQYKGLEALYQKYKDRGFIILGFPCNQFGNQEPGSDEEIAQFCQKNYGVTFPVLAKINVNGDNVDPVYQFLKSQKKQLGLERIKWNFEKFLVNRQGQVIERYSSISKPEHLENDIESVL</sequence>
<reference key="1">
    <citation type="journal article" date="1999" name="Yeast">
        <title>Schizosaccharomyces pombe homologue of glutathione peroxidase, which does not contain selenocysteine, is induced by several stresses and works as an antioxidant.</title>
        <authorList>
            <person name="Yamada K."/>
            <person name="Nakagawa C.W."/>
            <person name="Mutoh N."/>
        </authorList>
    </citation>
    <scope>NUCLEOTIDE SEQUENCE [GENOMIC DNA]</scope>
    <scope>FUNCTION</scope>
    <scope>INDUCTION</scope>
    <source>
        <strain>JY741</strain>
    </source>
</reference>
<reference key="2">
    <citation type="journal article" date="2002" name="Nature">
        <title>The genome sequence of Schizosaccharomyces pombe.</title>
        <authorList>
            <person name="Wood V."/>
            <person name="Gwilliam R."/>
            <person name="Rajandream M.A."/>
            <person name="Lyne M.H."/>
            <person name="Lyne R."/>
            <person name="Stewart A."/>
            <person name="Sgouros J.G."/>
            <person name="Peat N."/>
            <person name="Hayles J."/>
            <person name="Baker S.G."/>
            <person name="Basham D."/>
            <person name="Bowman S."/>
            <person name="Brooks K."/>
            <person name="Brown D."/>
            <person name="Brown S."/>
            <person name="Chillingworth T."/>
            <person name="Churcher C.M."/>
            <person name="Collins M."/>
            <person name="Connor R."/>
            <person name="Cronin A."/>
            <person name="Davis P."/>
            <person name="Feltwell T."/>
            <person name="Fraser A."/>
            <person name="Gentles S."/>
            <person name="Goble A."/>
            <person name="Hamlin N."/>
            <person name="Harris D.E."/>
            <person name="Hidalgo J."/>
            <person name="Hodgson G."/>
            <person name="Holroyd S."/>
            <person name="Hornsby T."/>
            <person name="Howarth S."/>
            <person name="Huckle E.J."/>
            <person name="Hunt S."/>
            <person name="Jagels K."/>
            <person name="James K.D."/>
            <person name="Jones L."/>
            <person name="Jones M."/>
            <person name="Leather S."/>
            <person name="McDonald S."/>
            <person name="McLean J."/>
            <person name="Mooney P."/>
            <person name="Moule S."/>
            <person name="Mungall K.L."/>
            <person name="Murphy L.D."/>
            <person name="Niblett D."/>
            <person name="Odell C."/>
            <person name="Oliver K."/>
            <person name="O'Neil S."/>
            <person name="Pearson D."/>
            <person name="Quail M.A."/>
            <person name="Rabbinowitsch E."/>
            <person name="Rutherford K.M."/>
            <person name="Rutter S."/>
            <person name="Saunders D."/>
            <person name="Seeger K."/>
            <person name="Sharp S."/>
            <person name="Skelton J."/>
            <person name="Simmonds M.N."/>
            <person name="Squares R."/>
            <person name="Squares S."/>
            <person name="Stevens K."/>
            <person name="Taylor K."/>
            <person name="Taylor R.G."/>
            <person name="Tivey A."/>
            <person name="Walsh S.V."/>
            <person name="Warren T."/>
            <person name="Whitehead S."/>
            <person name="Woodward J.R."/>
            <person name="Volckaert G."/>
            <person name="Aert R."/>
            <person name="Robben J."/>
            <person name="Grymonprez B."/>
            <person name="Weltjens I."/>
            <person name="Vanstreels E."/>
            <person name="Rieger M."/>
            <person name="Schaefer M."/>
            <person name="Mueller-Auer S."/>
            <person name="Gabel C."/>
            <person name="Fuchs M."/>
            <person name="Duesterhoeft A."/>
            <person name="Fritzc C."/>
            <person name="Holzer E."/>
            <person name="Moestl D."/>
            <person name="Hilbert H."/>
            <person name="Borzym K."/>
            <person name="Langer I."/>
            <person name="Beck A."/>
            <person name="Lehrach H."/>
            <person name="Reinhardt R."/>
            <person name="Pohl T.M."/>
            <person name="Eger P."/>
            <person name="Zimmermann W."/>
            <person name="Wedler H."/>
            <person name="Wambutt R."/>
            <person name="Purnelle B."/>
            <person name="Goffeau A."/>
            <person name="Cadieu E."/>
            <person name="Dreano S."/>
            <person name="Gloux S."/>
            <person name="Lelaure V."/>
            <person name="Mottier S."/>
            <person name="Galibert F."/>
            <person name="Aves S.J."/>
            <person name="Xiang Z."/>
            <person name="Hunt C."/>
            <person name="Moore K."/>
            <person name="Hurst S.M."/>
            <person name="Lucas M."/>
            <person name="Rochet M."/>
            <person name="Gaillardin C."/>
            <person name="Tallada V.A."/>
            <person name="Garzon A."/>
            <person name="Thode G."/>
            <person name="Daga R.R."/>
            <person name="Cruzado L."/>
            <person name="Jimenez J."/>
            <person name="Sanchez M."/>
            <person name="del Rey F."/>
            <person name="Benito J."/>
            <person name="Dominguez A."/>
            <person name="Revuelta J.L."/>
            <person name="Moreno S."/>
            <person name="Armstrong J."/>
            <person name="Forsburg S.L."/>
            <person name="Cerutti L."/>
            <person name="Lowe T."/>
            <person name="McCombie W.R."/>
            <person name="Paulsen I."/>
            <person name="Potashkin J."/>
            <person name="Shpakovski G.V."/>
            <person name="Ussery D."/>
            <person name="Barrell B.G."/>
            <person name="Nurse P."/>
        </authorList>
    </citation>
    <scope>NUCLEOTIDE SEQUENCE [LARGE SCALE GENOMIC DNA]</scope>
    <source>
        <strain>972 / ATCC 24843</strain>
    </source>
</reference>
<reference key="3">
    <citation type="journal article" date="2008" name="Biochem. Biophys. Res. Commun.">
        <title>Gpx1 is a stationary phase-specific thioredoxin peroxidase in fission yeast.</title>
        <authorList>
            <person name="Lee S.Y."/>
            <person name="Song J.Y."/>
            <person name="Kwon E.S."/>
            <person name="Roe J.H."/>
        </authorList>
    </citation>
    <scope>FUNCTION</scope>
    <scope>CATALYTIC ACTIVITY</scope>
    <scope>SUBCELLULAR LOCATION</scope>
</reference>
<reference key="4">
    <citation type="journal article" date="2010" name="BMB Rep.">
        <title>Distinct functional roles of peroxiredoxin isozymes and glutathione peroxidase from fission yeast, Schizosaccharomyces pombe.</title>
        <authorList>
            <person name="Kim J.S."/>
            <person name="Bang M.A."/>
            <person name="Lee S."/>
            <person name="Chae H.Z."/>
            <person name="Kim K."/>
        </authorList>
    </citation>
    <scope>FUNCTION</scope>
    <scope>SUBUNIT</scope>
</reference>
<feature type="chain" id="PRO_0000066644" description="Glutathione peroxidase-like peroxiredoxin gpx1">
    <location>
        <begin position="1"/>
        <end position="158"/>
    </location>
</feature>
<feature type="active site" description="Cysteine sulfenic acid (-SOH) intermediate" evidence="1">
    <location>
        <position position="36"/>
    </location>
</feature>
<feature type="disulfide bond" description="Redox-active" evidence="1">
    <location>
        <begin position="36"/>
        <end position="82"/>
    </location>
</feature>
<proteinExistence type="evidence at protein level"/>
<dbReference type="EC" id="1.11.1.24" evidence="3"/>
<dbReference type="EMBL" id="AB012395">
    <property type="protein sequence ID" value="BAA25326.1"/>
    <property type="molecule type" value="Genomic_DNA"/>
</dbReference>
<dbReference type="EMBL" id="CU329671">
    <property type="protein sequence ID" value="CAA19364.1"/>
    <property type="molecule type" value="Genomic_DNA"/>
</dbReference>
<dbReference type="PIR" id="T43376">
    <property type="entry name" value="T43376"/>
</dbReference>
<dbReference type="RefSeq" id="NP_596146.1">
    <property type="nucleotide sequence ID" value="NM_001022065.2"/>
</dbReference>
<dbReference type="SMR" id="O59858"/>
<dbReference type="BioGRID" id="276755">
    <property type="interactions" value="15"/>
</dbReference>
<dbReference type="FunCoup" id="O59858">
    <property type="interactions" value="104"/>
</dbReference>
<dbReference type="STRING" id="284812.O59858"/>
<dbReference type="PeroxiBase" id="3744">
    <property type="entry name" value="SpomGPx01"/>
</dbReference>
<dbReference type="iPTMnet" id="O59858"/>
<dbReference type="PaxDb" id="4896-SPBC32F12.03c.1"/>
<dbReference type="EnsemblFungi" id="SPBC32F12.03c.1">
    <property type="protein sequence ID" value="SPBC32F12.03c.1:pep"/>
    <property type="gene ID" value="SPBC32F12.03c"/>
</dbReference>
<dbReference type="GeneID" id="2540222"/>
<dbReference type="KEGG" id="spo:2540222"/>
<dbReference type="PomBase" id="SPBC32F12.03c">
    <property type="gene designation" value="gpx1"/>
</dbReference>
<dbReference type="VEuPathDB" id="FungiDB:SPBC32F12.03c"/>
<dbReference type="eggNOG" id="KOG1651">
    <property type="taxonomic scope" value="Eukaryota"/>
</dbReference>
<dbReference type="HOGENOM" id="CLU_029507_3_2_1"/>
<dbReference type="InParanoid" id="O59858"/>
<dbReference type="OMA" id="TFPMTEK"/>
<dbReference type="PhylomeDB" id="O59858"/>
<dbReference type="PRO" id="PR:O59858"/>
<dbReference type="Proteomes" id="UP000002485">
    <property type="component" value="Chromosome II"/>
</dbReference>
<dbReference type="GO" id="GO:0005737">
    <property type="term" value="C:cytoplasm"/>
    <property type="evidence" value="ECO:0007005"/>
    <property type="project" value="PomBase"/>
</dbReference>
<dbReference type="GO" id="GO:0005829">
    <property type="term" value="C:cytosol"/>
    <property type="evidence" value="ECO:0000314"/>
    <property type="project" value="PomBase"/>
</dbReference>
<dbReference type="GO" id="GO:0005739">
    <property type="term" value="C:mitochondrion"/>
    <property type="evidence" value="ECO:0000314"/>
    <property type="project" value="PomBase"/>
</dbReference>
<dbReference type="GO" id="GO:0005634">
    <property type="term" value="C:nucleus"/>
    <property type="evidence" value="ECO:0007005"/>
    <property type="project" value="PomBase"/>
</dbReference>
<dbReference type="GO" id="GO:0008379">
    <property type="term" value="F:thioredoxin peroxidase activity"/>
    <property type="evidence" value="ECO:0000314"/>
    <property type="project" value="PomBase"/>
</dbReference>
<dbReference type="GO" id="GO:0140824">
    <property type="term" value="F:thioredoxin-dependent peroxiredoxin activity"/>
    <property type="evidence" value="ECO:0000314"/>
    <property type="project" value="PomBase"/>
</dbReference>
<dbReference type="GO" id="GO:0045454">
    <property type="term" value="P:cell redox homeostasis"/>
    <property type="evidence" value="ECO:0000315"/>
    <property type="project" value="PomBase"/>
</dbReference>
<dbReference type="GO" id="GO:0061692">
    <property type="term" value="P:cellular detoxification of hydrogen peroxide"/>
    <property type="evidence" value="ECO:0000314"/>
    <property type="project" value="PomBase"/>
</dbReference>
<dbReference type="GO" id="GO:0034599">
    <property type="term" value="P:cellular response to oxidative stress"/>
    <property type="evidence" value="ECO:0000318"/>
    <property type="project" value="GO_Central"/>
</dbReference>
<dbReference type="GO" id="GO:0042744">
    <property type="term" value="P:hydrogen peroxide catabolic process"/>
    <property type="evidence" value="ECO:0000314"/>
    <property type="project" value="PomBase"/>
</dbReference>
<dbReference type="CDD" id="cd00340">
    <property type="entry name" value="GSH_Peroxidase"/>
    <property type="match status" value="1"/>
</dbReference>
<dbReference type="FunFam" id="3.40.30.10:FF:000010">
    <property type="entry name" value="Glutathione peroxidase"/>
    <property type="match status" value="1"/>
</dbReference>
<dbReference type="Gene3D" id="3.40.30.10">
    <property type="entry name" value="Glutaredoxin"/>
    <property type="match status" value="1"/>
</dbReference>
<dbReference type="InterPro" id="IPR000889">
    <property type="entry name" value="Glutathione_peroxidase"/>
</dbReference>
<dbReference type="InterPro" id="IPR029759">
    <property type="entry name" value="GPX_AS"/>
</dbReference>
<dbReference type="InterPro" id="IPR029760">
    <property type="entry name" value="GPX_CS"/>
</dbReference>
<dbReference type="InterPro" id="IPR036249">
    <property type="entry name" value="Thioredoxin-like_sf"/>
</dbReference>
<dbReference type="PANTHER" id="PTHR11592">
    <property type="entry name" value="GLUTATHIONE PEROXIDASE"/>
    <property type="match status" value="1"/>
</dbReference>
<dbReference type="PANTHER" id="PTHR11592:SF78">
    <property type="entry name" value="GLUTATHIONE PEROXIDASE"/>
    <property type="match status" value="1"/>
</dbReference>
<dbReference type="Pfam" id="PF00255">
    <property type="entry name" value="GSHPx"/>
    <property type="match status" value="1"/>
</dbReference>
<dbReference type="PIRSF" id="PIRSF000303">
    <property type="entry name" value="Glutathion_perox"/>
    <property type="match status" value="1"/>
</dbReference>
<dbReference type="PRINTS" id="PR01011">
    <property type="entry name" value="GLUTPROXDASE"/>
</dbReference>
<dbReference type="SUPFAM" id="SSF52833">
    <property type="entry name" value="Thioredoxin-like"/>
    <property type="match status" value="1"/>
</dbReference>
<dbReference type="PROSITE" id="PS00460">
    <property type="entry name" value="GLUTATHIONE_PEROXID_1"/>
    <property type="match status" value="1"/>
</dbReference>
<dbReference type="PROSITE" id="PS00763">
    <property type="entry name" value="GLUTATHIONE_PEROXID_2"/>
    <property type="match status" value="1"/>
</dbReference>
<dbReference type="PROSITE" id="PS51355">
    <property type="entry name" value="GLUTATHIONE_PEROXID_3"/>
    <property type="match status" value="1"/>
</dbReference>
<comment type="function">
    <text evidence="2 4">Glutathione peroxidase-like protein that protects cells during oxidative stress. Has peroxidase activity reducing hydrogen peroxide, alkyl and phospholipid hydroperoxides using preferentially thioredoxin as a reducing power. May act as a scavenger of H(2)O(2).</text>
</comment>
<comment type="catalytic activity">
    <reaction evidence="3">
        <text>a hydroperoxide + [thioredoxin]-dithiol = an alcohol + [thioredoxin]-disulfide + H2O</text>
        <dbReference type="Rhea" id="RHEA:62620"/>
        <dbReference type="Rhea" id="RHEA-COMP:10698"/>
        <dbReference type="Rhea" id="RHEA-COMP:10700"/>
        <dbReference type="ChEBI" id="CHEBI:15377"/>
        <dbReference type="ChEBI" id="CHEBI:29950"/>
        <dbReference type="ChEBI" id="CHEBI:30879"/>
        <dbReference type="ChEBI" id="CHEBI:35924"/>
        <dbReference type="ChEBI" id="CHEBI:50058"/>
        <dbReference type="EC" id="1.11.1.24"/>
    </reaction>
</comment>
<comment type="subunit">
    <text evidence="4">Monomer.</text>
</comment>
<comment type="subcellular location">
    <subcellularLocation>
        <location evidence="3">Cytoplasm</location>
    </subcellularLocation>
    <subcellularLocation>
        <location evidence="3">Mitochondrion</location>
    </subcellularLocation>
</comment>
<comment type="induction">
    <text evidence="2">By oxidative, osmo- and heat stress.</text>
</comment>
<comment type="miscellaneous">
    <text evidence="1">The active site is a conserved redox-active cysteine residue, the peroxidatic cysteine (C(P)), which makes the nucleophilic attack on the peroxide substrate. The peroxide oxidizes the C(P)-SH to cysteine sulfenic acid (C(P)-SOH), which then reacts with another cysteine residue, the resolving cysteine (C(R)), to form a disulfide bridge. The disulfide is subsequently reduced by an appropriate electron donor to complete the catalytic cycle. In this atypical 2-Cys peroxiredoxin, C(R) is present in the same subunit to form an intramolecular disulfide.</text>
</comment>
<comment type="similarity">
    <text evidence="7">Belongs to the glutathione peroxidase family.</text>
</comment>
<comment type="caution">
    <text evidence="8 9">Was originally thought to be a glutathione peroxidase (PubMed:10455235), but functions as an atypical 2-Cys peroxiredoxin using thioredoxin as reducing power instead (PubMed:18162174).</text>
</comment>
<keyword id="KW-0049">Antioxidant</keyword>
<keyword id="KW-0963">Cytoplasm</keyword>
<keyword id="KW-1015">Disulfide bond</keyword>
<keyword id="KW-0496">Mitochondrion</keyword>
<keyword id="KW-0560">Oxidoreductase</keyword>
<keyword id="KW-0575">Peroxidase</keyword>
<keyword id="KW-0676">Redox-active center</keyword>
<keyword id="KW-1185">Reference proteome</keyword>
<keyword id="KW-0346">Stress response</keyword>
<gene>
    <name evidence="5" type="primary">gpx1</name>
    <name evidence="10" type="ORF">SPBC32F12.03c</name>
</gene>
<organism>
    <name type="scientific">Schizosaccharomyces pombe (strain 972 / ATCC 24843)</name>
    <name type="common">Fission yeast</name>
    <dbReference type="NCBI Taxonomy" id="284812"/>
    <lineage>
        <taxon>Eukaryota</taxon>
        <taxon>Fungi</taxon>
        <taxon>Dikarya</taxon>
        <taxon>Ascomycota</taxon>
        <taxon>Taphrinomycotina</taxon>
        <taxon>Schizosaccharomycetes</taxon>
        <taxon>Schizosaccharomycetales</taxon>
        <taxon>Schizosaccharomycetaceae</taxon>
        <taxon>Schizosaccharomyces</taxon>
    </lineage>
</organism>
<evidence type="ECO:0000250" key="1">
    <source>
        <dbReference type="UniProtKB" id="P40581"/>
    </source>
</evidence>
<evidence type="ECO:0000269" key="2">
    <source>
    </source>
</evidence>
<evidence type="ECO:0000269" key="3">
    <source>
    </source>
</evidence>
<evidence type="ECO:0000269" key="4">
    <source>
    </source>
</evidence>
<evidence type="ECO:0000303" key="5">
    <source>
    </source>
</evidence>
<evidence type="ECO:0000303" key="6">
    <source>
    </source>
</evidence>
<evidence type="ECO:0000305" key="7"/>
<evidence type="ECO:0000305" key="8">
    <source>
    </source>
</evidence>
<evidence type="ECO:0000305" key="9">
    <source>
    </source>
</evidence>
<evidence type="ECO:0000312" key="10">
    <source>
        <dbReference type="PomBase" id="SPBC32F12.03c"/>
    </source>
</evidence>
<accession>O59858</accession>
<protein>
    <recommendedName>
        <fullName evidence="7">Glutathione peroxidase-like peroxiredoxin gpx1</fullName>
        <ecNumber evidence="3">1.11.1.24</ecNumber>
    </recommendedName>
    <alternativeName>
        <fullName evidence="5">Glutathione peroxidase homolog</fullName>
        <shortName>GPx</shortName>
    </alternativeName>
    <alternativeName>
        <fullName evidence="6">Thioredoxin peroxidase gpx1</fullName>
    </alternativeName>
</protein>